<comment type="function">
    <text evidence="1">Component of the cytochrome c oxidase, the last enzyme in the mitochondrial electron transport chain which drives oxidative phosphorylation. The respiratory chain contains 3 multisubunit complexes succinate dehydrogenase (complex II, CII), ubiquinol-cytochrome c oxidoreductase (cytochrome b-c1 complex, complex III, CIII) and cytochrome c oxidase (complex IV, CIV), that cooperate to transfer electrons derived from NADH and succinate to molecular oxygen, creating an electrochemical gradient over the inner membrane that drives transmembrane transport and the ATP synthase. Cytochrome c oxidase is the component of the respiratory chain that catalyzes the reduction of oxygen to water. Electrons originating from reduced cytochrome c in the intermembrane space (IMS) are transferred via the dinuclear copper A center (CU(A)) of subunit 2 and heme A of subunit 1 to the active site in subunit 1, a binuclear center (BNC) formed by heme A3 and copper B (CU(B)). The BNC reduces molecular oxygen to 2 water molecules using 4 electrons from cytochrome c in the IMS and 4 protons from the mitochondrial matrix.</text>
</comment>
<comment type="catalytic activity">
    <reaction evidence="1">
        <text>4 Fe(II)-[cytochrome c] + O2 + 8 H(+)(in) = 4 Fe(III)-[cytochrome c] + 2 H2O + 4 H(+)(out)</text>
        <dbReference type="Rhea" id="RHEA:11436"/>
        <dbReference type="Rhea" id="RHEA-COMP:10350"/>
        <dbReference type="Rhea" id="RHEA-COMP:14399"/>
        <dbReference type="ChEBI" id="CHEBI:15377"/>
        <dbReference type="ChEBI" id="CHEBI:15378"/>
        <dbReference type="ChEBI" id="CHEBI:15379"/>
        <dbReference type="ChEBI" id="CHEBI:29033"/>
        <dbReference type="ChEBI" id="CHEBI:29034"/>
        <dbReference type="EC" id="7.1.1.9"/>
    </reaction>
    <physiologicalReaction direction="left-to-right" evidence="1">
        <dbReference type="Rhea" id="RHEA:11437"/>
    </physiologicalReaction>
</comment>
<comment type="cofactor">
    <cofactor evidence="1">
        <name>Cu cation</name>
        <dbReference type="ChEBI" id="CHEBI:23378"/>
    </cofactor>
    <text evidence="1">Binds a dinuclear copper A center per subunit.</text>
</comment>
<comment type="subunit">
    <text evidence="1">Component of the cytochrome c oxidase (complex IV, CIV), a multisubunit enzyme composed of a catalytic core of 3 subunits and several supernumerary subunits. The complex exists as a monomer or a dimer and forms supercomplexes (SCs) in the inner mitochondrial membrane with ubiquinol-cytochrome c oxidoreductase (cytochrome b-c1 complex, complex III, CIII).</text>
</comment>
<comment type="subcellular location">
    <subcellularLocation>
        <location evidence="1">Mitochondrion inner membrane</location>
        <topology evidence="1">Multi-pass membrane protein</topology>
    </subcellularLocation>
</comment>
<comment type="similarity">
    <text evidence="3">Belongs to the cytochrome c oxidase subunit 2 family.</text>
</comment>
<sequence length="254" mass="29186">MNNILNFYPAVITTDVAENWQIGFQDPATPIMEGIINLHYDLMFFICVISVFVSWMLGRTLWHFEQNQNKIPSSLTHGTLIEMIWTVTPAFILLIIAVPSFSLLYAMDEIISPAITIKTLGHQWYWSYEYSDYLNEDDDSINYDSYMIPEEDLEIGQFRLLEVDNRMVIPINTHIRVIVTAADVLHSWAVPSFRSKCDAIPGRLNQTSLFIKREGVYYGQCSEICGINHGFMPIVVEATSLPNYVSWISNKLNE</sequence>
<name>COX2_CHOCR</name>
<proteinExistence type="inferred from homology"/>
<organism>
    <name type="scientific">Chondrus crispus</name>
    <name type="common">Carrageen Irish moss</name>
    <name type="synonym">Polymorpha crispa</name>
    <dbReference type="NCBI Taxonomy" id="2769"/>
    <lineage>
        <taxon>Eukaryota</taxon>
        <taxon>Rhodophyta</taxon>
        <taxon>Florideophyceae</taxon>
        <taxon>Rhodymeniophycidae</taxon>
        <taxon>Gigartinales</taxon>
        <taxon>Gigartinaceae</taxon>
        <taxon>Chondrus</taxon>
    </lineage>
</organism>
<protein>
    <recommendedName>
        <fullName>Cytochrome c oxidase subunit 2</fullName>
        <ecNumber>7.1.1.9</ecNumber>
    </recommendedName>
    <alternativeName>
        <fullName>Cytochrome c oxidase polypeptide II</fullName>
    </alternativeName>
</protein>
<evidence type="ECO:0000250" key="1">
    <source>
        <dbReference type="UniProtKB" id="P00410"/>
    </source>
</evidence>
<evidence type="ECO:0000255" key="2"/>
<evidence type="ECO:0000305" key="3"/>
<reference key="1">
    <citation type="journal article" date="1995" name="J. Mol. Biol.">
        <title>Complete sequence of the mitochondrial DNA of the rhodophyte Chondrus crispus (Gigartinales). Gene content and genome organization.</title>
        <authorList>
            <person name="Leblanc C."/>
            <person name="Boyen C."/>
            <person name="Richard O."/>
            <person name="Bonnard G."/>
            <person name="Grienenberger J.-M."/>
            <person name="Kloareg B."/>
        </authorList>
    </citation>
    <scope>NUCLEOTIDE SEQUENCE [GENOMIC DNA]</scope>
    <source>
        <tissue>Apices</tissue>
    </source>
</reference>
<keyword id="KW-0186">Copper</keyword>
<keyword id="KW-0249">Electron transport</keyword>
<keyword id="KW-0460">Magnesium</keyword>
<keyword id="KW-0472">Membrane</keyword>
<keyword id="KW-0479">Metal-binding</keyword>
<keyword id="KW-0496">Mitochondrion</keyword>
<keyword id="KW-0999">Mitochondrion inner membrane</keyword>
<keyword id="KW-0679">Respiratory chain</keyword>
<keyword id="KW-1278">Translocase</keyword>
<keyword id="KW-0812">Transmembrane</keyword>
<keyword id="KW-1133">Transmembrane helix</keyword>
<keyword id="KW-0813">Transport</keyword>
<gene>
    <name type="primary">COX2</name>
</gene>
<geneLocation type="mitochondrion"/>
<dbReference type="EC" id="7.1.1.9"/>
<dbReference type="EMBL" id="Z47547">
    <property type="protein sequence ID" value="CAA87604.1"/>
    <property type="molecule type" value="Genomic_DNA"/>
</dbReference>
<dbReference type="PIR" id="S59088">
    <property type="entry name" value="S59088"/>
</dbReference>
<dbReference type="RefSeq" id="NP_062483.1">
    <property type="nucleotide sequence ID" value="NC_001677.2"/>
</dbReference>
<dbReference type="SMR" id="P48869"/>
<dbReference type="GeneID" id="809362"/>
<dbReference type="KEGG" id="ccp:ChcroMp04"/>
<dbReference type="GO" id="GO:0005743">
    <property type="term" value="C:mitochondrial inner membrane"/>
    <property type="evidence" value="ECO:0007669"/>
    <property type="project" value="UniProtKB-SubCell"/>
</dbReference>
<dbReference type="GO" id="GO:0005507">
    <property type="term" value="F:copper ion binding"/>
    <property type="evidence" value="ECO:0007669"/>
    <property type="project" value="InterPro"/>
</dbReference>
<dbReference type="GO" id="GO:0004129">
    <property type="term" value="F:cytochrome-c oxidase activity"/>
    <property type="evidence" value="ECO:0007669"/>
    <property type="project" value="UniProtKB-EC"/>
</dbReference>
<dbReference type="GO" id="GO:0042773">
    <property type="term" value="P:ATP synthesis coupled electron transport"/>
    <property type="evidence" value="ECO:0007669"/>
    <property type="project" value="TreeGrafter"/>
</dbReference>
<dbReference type="CDD" id="cd13912">
    <property type="entry name" value="CcO_II_C"/>
    <property type="match status" value="1"/>
</dbReference>
<dbReference type="FunFam" id="1.10.287.90:FF:000004">
    <property type="entry name" value="Cytochrome c oxidase subunit 2"/>
    <property type="match status" value="1"/>
</dbReference>
<dbReference type="FunFam" id="2.60.40.420:FF:000001">
    <property type="entry name" value="Cytochrome c oxidase subunit 2"/>
    <property type="match status" value="1"/>
</dbReference>
<dbReference type="Gene3D" id="1.10.287.90">
    <property type="match status" value="1"/>
</dbReference>
<dbReference type="Gene3D" id="2.60.40.420">
    <property type="entry name" value="Cupredoxins - blue copper proteins"/>
    <property type="match status" value="1"/>
</dbReference>
<dbReference type="InterPro" id="IPR045187">
    <property type="entry name" value="CcO_II"/>
</dbReference>
<dbReference type="InterPro" id="IPR002429">
    <property type="entry name" value="CcO_II-like_C"/>
</dbReference>
<dbReference type="InterPro" id="IPR034210">
    <property type="entry name" value="CcO_II_C"/>
</dbReference>
<dbReference type="InterPro" id="IPR001505">
    <property type="entry name" value="Copper_CuA"/>
</dbReference>
<dbReference type="InterPro" id="IPR008972">
    <property type="entry name" value="Cupredoxin"/>
</dbReference>
<dbReference type="InterPro" id="IPR014222">
    <property type="entry name" value="Cyt_c_oxidase_su2"/>
</dbReference>
<dbReference type="InterPro" id="IPR011759">
    <property type="entry name" value="Cyt_c_oxidase_su2_TM_dom"/>
</dbReference>
<dbReference type="InterPro" id="IPR036257">
    <property type="entry name" value="Cyt_c_oxidase_su2_TM_sf"/>
</dbReference>
<dbReference type="NCBIfam" id="TIGR02866">
    <property type="entry name" value="CoxB"/>
    <property type="match status" value="1"/>
</dbReference>
<dbReference type="PANTHER" id="PTHR22888:SF9">
    <property type="entry name" value="CYTOCHROME C OXIDASE SUBUNIT 2"/>
    <property type="match status" value="1"/>
</dbReference>
<dbReference type="PANTHER" id="PTHR22888">
    <property type="entry name" value="CYTOCHROME C OXIDASE, SUBUNIT II"/>
    <property type="match status" value="1"/>
</dbReference>
<dbReference type="Pfam" id="PF00116">
    <property type="entry name" value="COX2"/>
    <property type="match status" value="1"/>
</dbReference>
<dbReference type="Pfam" id="PF02790">
    <property type="entry name" value="COX2_TM"/>
    <property type="match status" value="1"/>
</dbReference>
<dbReference type="PRINTS" id="PR01166">
    <property type="entry name" value="CYCOXIDASEII"/>
</dbReference>
<dbReference type="SUPFAM" id="SSF49503">
    <property type="entry name" value="Cupredoxins"/>
    <property type="match status" value="1"/>
</dbReference>
<dbReference type="SUPFAM" id="SSF81464">
    <property type="entry name" value="Cytochrome c oxidase subunit II-like, transmembrane region"/>
    <property type="match status" value="1"/>
</dbReference>
<dbReference type="PROSITE" id="PS00078">
    <property type="entry name" value="COX2"/>
    <property type="match status" value="1"/>
</dbReference>
<dbReference type="PROSITE" id="PS50857">
    <property type="entry name" value="COX2_CUA"/>
    <property type="match status" value="1"/>
</dbReference>
<dbReference type="PROSITE" id="PS50999">
    <property type="entry name" value="COX2_TM"/>
    <property type="match status" value="1"/>
</dbReference>
<feature type="chain" id="PRO_0000183549" description="Cytochrome c oxidase subunit 2">
    <location>
        <begin position="1"/>
        <end position="254"/>
    </location>
</feature>
<feature type="topological domain" description="Mitochondrial intermembrane" evidence="2">
    <location>
        <begin position="1"/>
        <end position="37"/>
    </location>
</feature>
<feature type="transmembrane region" description="Helical" evidence="2">
    <location>
        <begin position="38"/>
        <end position="58"/>
    </location>
</feature>
<feature type="topological domain" description="Mitochondrial matrix" evidence="2">
    <location>
        <begin position="59"/>
        <end position="83"/>
    </location>
</feature>
<feature type="transmembrane region" description="Helical" evidence="2">
    <location>
        <begin position="84"/>
        <end position="104"/>
    </location>
</feature>
<feature type="topological domain" description="Mitochondrial intermembrane" evidence="2">
    <location>
        <begin position="105"/>
        <end position="254"/>
    </location>
</feature>
<feature type="binding site" evidence="1">
    <location>
        <position position="186"/>
    </location>
    <ligand>
        <name>Cu cation</name>
        <dbReference type="ChEBI" id="CHEBI:23378"/>
        <label>A1</label>
    </ligand>
</feature>
<feature type="binding site" evidence="1">
    <location>
        <position position="221"/>
    </location>
    <ligand>
        <name>Cu cation</name>
        <dbReference type="ChEBI" id="CHEBI:23378"/>
        <label>A1</label>
    </ligand>
</feature>
<feature type="binding site" evidence="1">
    <location>
        <position position="221"/>
    </location>
    <ligand>
        <name>Cu cation</name>
        <dbReference type="ChEBI" id="CHEBI:23378"/>
        <label>A2</label>
    </ligand>
</feature>
<feature type="binding site" evidence="1">
    <location>
        <position position="223"/>
    </location>
    <ligand>
        <name>Cu cation</name>
        <dbReference type="ChEBI" id="CHEBI:23378"/>
        <label>A2</label>
    </ligand>
</feature>
<feature type="binding site" evidence="1">
    <location>
        <position position="223"/>
    </location>
    <ligand>
        <name>Mg(2+)</name>
        <dbReference type="ChEBI" id="CHEBI:18420"/>
        <note>ligand shared with subunit 1</note>
    </ligand>
</feature>
<feature type="binding site" evidence="1">
    <location>
        <position position="225"/>
    </location>
    <ligand>
        <name>Cu cation</name>
        <dbReference type="ChEBI" id="CHEBI:23378"/>
        <label>A1</label>
    </ligand>
</feature>
<feature type="binding site" evidence="1">
    <location>
        <position position="225"/>
    </location>
    <ligand>
        <name>Cu cation</name>
        <dbReference type="ChEBI" id="CHEBI:23378"/>
        <label>A2</label>
    </ligand>
</feature>
<feature type="binding site" evidence="1">
    <location>
        <position position="229"/>
    </location>
    <ligand>
        <name>Cu cation</name>
        <dbReference type="ChEBI" id="CHEBI:23378"/>
        <label>A2</label>
    </ligand>
</feature>
<feature type="binding site" evidence="1">
    <location>
        <position position="232"/>
    </location>
    <ligand>
        <name>Cu cation</name>
        <dbReference type="ChEBI" id="CHEBI:23378"/>
        <label>A1</label>
    </ligand>
</feature>
<accession>P48869</accession>